<keyword id="KW-0030">Aminoacyl-tRNA synthetase</keyword>
<keyword id="KW-0067">ATP-binding</keyword>
<keyword id="KW-0963">Cytoplasm</keyword>
<keyword id="KW-0436">Ligase</keyword>
<keyword id="KW-0460">Magnesium</keyword>
<keyword id="KW-0479">Metal-binding</keyword>
<keyword id="KW-0547">Nucleotide-binding</keyword>
<keyword id="KW-0648">Protein biosynthesis</keyword>
<gene>
    <name evidence="1" type="primary">pheS</name>
    <name type="ordered locus">Pmob_0211</name>
</gene>
<dbReference type="EC" id="6.1.1.20" evidence="1"/>
<dbReference type="EMBL" id="CP000879">
    <property type="protein sequence ID" value="ABX30957.1"/>
    <property type="molecule type" value="Genomic_DNA"/>
</dbReference>
<dbReference type="RefSeq" id="WP_012208064.1">
    <property type="nucleotide sequence ID" value="NC_010003.1"/>
</dbReference>
<dbReference type="SMR" id="A9BFH2"/>
<dbReference type="STRING" id="403833.Pmob_0211"/>
<dbReference type="KEGG" id="pmo:Pmob_0211"/>
<dbReference type="eggNOG" id="COG0016">
    <property type="taxonomic scope" value="Bacteria"/>
</dbReference>
<dbReference type="HOGENOM" id="CLU_025086_0_1_0"/>
<dbReference type="OrthoDB" id="9800719at2"/>
<dbReference type="Proteomes" id="UP000000789">
    <property type="component" value="Chromosome"/>
</dbReference>
<dbReference type="GO" id="GO:0005737">
    <property type="term" value="C:cytoplasm"/>
    <property type="evidence" value="ECO:0007669"/>
    <property type="project" value="UniProtKB-SubCell"/>
</dbReference>
<dbReference type="GO" id="GO:0005524">
    <property type="term" value="F:ATP binding"/>
    <property type="evidence" value="ECO:0007669"/>
    <property type="project" value="UniProtKB-UniRule"/>
</dbReference>
<dbReference type="GO" id="GO:0000287">
    <property type="term" value="F:magnesium ion binding"/>
    <property type="evidence" value="ECO:0007669"/>
    <property type="project" value="UniProtKB-UniRule"/>
</dbReference>
<dbReference type="GO" id="GO:0004826">
    <property type="term" value="F:phenylalanine-tRNA ligase activity"/>
    <property type="evidence" value="ECO:0007669"/>
    <property type="project" value="UniProtKB-UniRule"/>
</dbReference>
<dbReference type="GO" id="GO:0000049">
    <property type="term" value="F:tRNA binding"/>
    <property type="evidence" value="ECO:0007669"/>
    <property type="project" value="InterPro"/>
</dbReference>
<dbReference type="GO" id="GO:0006432">
    <property type="term" value="P:phenylalanyl-tRNA aminoacylation"/>
    <property type="evidence" value="ECO:0007669"/>
    <property type="project" value="UniProtKB-UniRule"/>
</dbReference>
<dbReference type="CDD" id="cd00496">
    <property type="entry name" value="PheRS_alpha_core"/>
    <property type="match status" value="1"/>
</dbReference>
<dbReference type="FunFam" id="3.30.930.10:FF:000003">
    <property type="entry name" value="Phenylalanine--tRNA ligase alpha subunit"/>
    <property type="match status" value="1"/>
</dbReference>
<dbReference type="Gene3D" id="3.30.930.10">
    <property type="entry name" value="Bira Bifunctional Protein, Domain 2"/>
    <property type="match status" value="1"/>
</dbReference>
<dbReference type="HAMAP" id="MF_00281">
    <property type="entry name" value="Phe_tRNA_synth_alpha1"/>
    <property type="match status" value="1"/>
</dbReference>
<dbReference type="InterPro" id="IPR006195">
    <property type="entry name" value="aa-tRNA-synth_II"/>
</dbReference>
<dbReference type="InterPro" id="IPR045864">
    <property type="entry name" value="aa-tRNA-synth_II/BPL/LPL"/>
</dbReference>
<dbReference type="InterPro" id="IPR004188">
    <property type="entry name" value="Phe-tRNA_ligase_II_N"/>
</dbReference>
<dbReference type="InterPro" id="IPR022911">
    <property type="entry name" value="Phe_tRNA_ligase_alpha1_bac"/>
</dbReference>
<dbReference type="InterPro" id="IPR002319">
    <property type="entry name" value="Phenylalanyl-tRNA_Synthase"/>
</dbReference>
<dbReference type="InterPro" id="IPR010978">
    <property type="entry name" value="tRNA-bd_arm"/>
</dbReference>
<dbReference type="PANTHER" id="PTHR11538:SF41">
    <property type="entry name" value="PHENYLALANINE--TRNA LIGASE, MITOCHONDRIAL"/>
    <property type="match status" value="1"/>
</dbReference>
<dbReference type="PANTHER" id="PTHR11538">
    <property type="entry name" value="PHENYLALANYL-TRNA SYNTHETASE"/>
    <property type="match status" value="1"/>
</dbReference>
<dbReference type="Pfam" id="PF02912">
    <property type="entry name" value="Phe_tRNA-synt_N"/>
    <property type="match status" value="1"/>
</dbReference>
<dbReference type="Pfam" id="PF01409">
    <property type="entry name" value="tRNA-synt_2d"/>
    <property type="match status" value="1"/>
</dbReference>
<dbReference type="SUPFAM" id="SSF55681">
    <property type="entry name" value="Class II aaRS and biotin synthetases"/>
    <property type="match status" value="1"/>
</dbReference>
<dbReference type="SUPFAM" id="SSF46589">
    <property type="entry name" value="tRNA-binding arm"/>
    <property type="match status" value="1"/>
</dbReference>
<dbReference type="PROSITE" id="PS50862">
    <property type="entry name" value="AA_TRNA_LIGASE_II"/>
    <property type="match status" value="1"/>
</dbReference>
<proteinExistence type="inferred from homology"/>
<comment type="catalytic activity">
    <reaction evidence="1">
        <text>tRNA(Phe) + L-phenylalanine + ATP = L-phenylalanyl-tRNA(Phe) + AMP + diphosphate + H(+)</text>
        <dbReference type="Rhea" id="RHEA:19413"/>
        <dbReference type="Rhea" id="RHEA-COMP:9668"/>
        <dbReference type="Rhea" id="RHEA-COMP:9699"/>
        <dbReference type="ChEBI" id="CHEBI:15378"/>
        <dbReference type="ChEBI" id="CHEBI:30616"/>
        <dbReference type="ChEBI" id="CHEBI:33019"/>
        <dbReference type="ChEBI" id="CHEBI:58095"/>
        <dbReference type="ChEBI" id="CHEBI:78442"/>
        <dbReference type="ChEBI" id="CHEBI:78531"/>
        <dbReference type="ChEBI" id="CHEBI:456215"/>
        <dbReference type="EC" id="6.1.1.20"/>
    </reaction>
</comment>
<comment type="cofactor">
    <cofactor evidence="1">
        <name>Mg(2+)</name>
        <dbReference type="ChEBI" id="CHEBI:18420"/>
    </cofactor>
    <text evidence="1">Binds 2 magnesium ions per tetramer.</text>
</comment>
<comment type="subunit">
    <text evidence="1">Tetramer of two alpha and two beta subunits.</text>
</comment>
<comment type="subcellular location">
    <subcellularLocation>
        <location evidence="1">Cytoplasm</location>
    </subcellularLocation>
</comment>
<comment type="similarity">
    <text evidence="1">Belongs to the class-II aminoacyl-tRNA synthetase family. Phe-tRNA synthetase alpha subunit type 1 subfamily.</text>
</comment>
<accession>A9BFH2</accession>
<reference key="1">
    <citation type="submission" date="2007-11" db="EMBL/GenBank/DDBJ databases">
        <title>Complete sequence of Petroga mobilis SJ95.</title>
        <authorList>
            <consortium name="US DOE Joint Genome Institute"/>
            <person name="Copeland A."/>
            <person name="Lucas S."/>
            <person name="Lapidus A."/>
            <person name="Barry K."/>
            <person name="Glavina del Rio T."/>
            <person name="Dalin E."/>
            <person name="Tice H."/>
            <person name="Pitluck S."/>
            <person name="Meincke L."/>
            <person name="Brettin T."/>
            <person name="Bruce D."/>
            <person name="Detter J.C."/>
            <person name="Han C."/>
            <person name="Kuske C.R."/>
            <person name="Schmutz J."/>
            <person name="Larimer F."/>
            <person name="Land M."/>
            <person name="Hauser L."/>
            <person name="Kyrpides N."/>
            <person name="Mikhailova N."/>
            <person name="Noll K."/>
            <person name="Richardson P."/>
        </authorList>
    </citation>
    <scope>NUCLEOTIDE SEQUENCE [LARGE SCALE GENOMIC DNA]</scope>
    <source>
        <strain>DSM 10674 / SJ95</strain>
    </source>
</reference>
<sequence>MALTIDRDEIIGTLKREIQEITDMQEFQNLKSKYLGKKGLIKSLMNSLKDIDDVELKKEYGKSVNELKEELETLFDEKLSELKEKEREEKEKKNWVDITIPGARRKIGKENLITKTRKEIEEIFIGMGFSVAEGPEIENSWYNFDALNTPEWHPAREMQDTFYLSLDKEKLLRTHTSPVQVRTMLKSKPPLAIISPGRVYRKDELDATHSPVFHQVEGLYVDRNVSVSHLKMYLEVFAQKFFGNKVSVLLRPSYFPFTEPSFEVDISCIFCGGKGCNVCKNTGWIEILGAGLVHPNVFQSVNYDPKVWQGFAFGMGIERVAMLKYNIPDMRELYKNDIRFIENS</sequence>
<evidence type="ECO:0000255" key="1">
    <source>
        <dbReference type="HAMAP-Rule" id="MF_00281"/>
    </source>
</evidence>
<protein>
    <recommendedName>
        <fullName evidence="1">Phenylalanine--tRNA ligase alpha subunit</fullName>
        <ecNumber evidence="1">6.1.1.20</ecNumber>
    </recommendedName>
    <alternativeName>
        <fullName evidence="1">Phenylalanyl-tRNA synthetase alpha subunit</fullName>
        <shortName evidence="1">PheRS</shortName>
    </alternativeName>
</protein>
<organism>
    <name type="scientific">Petrotoga mobilis (strain DSM 10674 / SJ95)</name>
    <dbReference type="NCBI Taxonomy" id="403833"/>
    <lineage>
        <taxon>Bacteria</taxon>
        <taxon>Thermotogati</taxon>
        <taxon>Thermotogota</taxon>
        <taxon>Thermotogae</taxon>
        <taxon>Petrotogales</taxon>
        <taxon>Petrotogaceae</taxon>
        <taxon>Petrotoga</taxon>
    </lineage>
</organism>
<name>SYFA_PETMO</name>
<feature type="chain" id="PRO_1000114897" description="Phenylalanine--tRNA ligase alpha subunit">
    <location>
        <begin position="1"/>
        <end position="344"/>
    </location>
</feature>
<feature type="binding site" evidence="1">
    <location>
        <position position="259"/>
    </location>
    <ligand>
        <name>Mg(2+)</name>
        <dbReference type="ChEBI" id="CHEBI:18420"/>
        <note>shared with beta subunit</note>
    </ligand>
</feature>